<proteinExistence type="inferred from homology"/>
<sequence>MIPATYTLSQITAQLGGEWRGEDISVTAVRPLADAQAEHISFLANPKYKAEVHDSSAGAVIVSAKAADGFEGRNLIVADDPYLYFAKVARLFSPVVKARGGIHPTAVVEPSATVPASCEIGANAYIGANTVLGEGCRILANAVVQHDCKLGDEVVLHPNAVVYYGCTLGRRVEIHSGAVIGADGFGLAFAGDSWFKIPQTGAVTLGDDVEIGSNTNIDRGAMSDTTVGNGTKIDNQVQIGHNCKIGSHTVIAAKTGISGSVTIGSYCIIGGGVGTVGHIEIADKTTIGGGTSVTHSITESGKHLAGIFPMSTHKEWARNAVYIHRLSEMNKRLKTLEQQLSDAGQDSK</sequence>
<evidence type="ECO:0000255" key="1">
    <source>
        <dbReference type="HAMAP-Rule" id="MF_00523"/>
    </source>
</evidence>
<gene>
    <name evidence="1" type="primary">lpxD</name>
    <name type="ordered locus">NMCC_1972</name>
</gene>
<accession>A9M3S8</accession>
<reference key="1">
    <citation type="journal article" date="2008" name="Genomics">
        <title>Characterization of ST-4821 complex, a unique Neisseria meningitidis clone.</title>
        <authorList>
            <person name="Peng J."/>
            <person name="Yang L."/>
            <person name="Yang F."/>
            <person name="Yang J."/>
            <person name="Yan Y."/>
            <person name="Nie H."/>
            <person name="Zhang X."/>
            <person name="Xiong Z."/>
            <person name="Jiang Y."/>
            <person name="Cheng F."/>
            <person name="Xu X."/>
            <person name="Chen S."/>
            <person name="Sun L."/>
            <person name="Li W."/>
            <person name="Shen Y."/>
            <person name="Shao Z."/>
            <person name="Liang X."/>
            <person name="Xu J."/>
            <person name="Jin Q."/>
        </authorList>
    </citation>
    <scope>NUCLEOTIDE SEQUENCE [LARGE SCALE GENOMIC DNA]</scope>
    <source>
        <strain>053442</strain>
    </source>
</reference>
<protein>
    <recommendedName>
        <fullName evidence="1">UDP-3-O-acylglucosamine N-acyltransferase</fullName>
        <ecNumber evidence="1">2.3.1.191</ecNumber>
    </recommendedName>
</protein>
<comment type="function">
    <text evidence="1">Catalyzes the N-acylation of UDP-3-O-acylglucosamine using 3-hydroxyacyl-ACP as the acyl donor. Is involved in the biosynthesis of lipid A, a phosphorylated glycolipid that anchors the lipopolysaccharide to the outer membrane of the cell.</text>
</comment>
<comment type="catalytic activity">
    <reaction evidence="1">
        <text>a UDP-3-O-[(3R)-3-hydroxyacyl]-alpha-D-glucosamine + a (3R)-hydroxyacyl-[ACP] = a UDP-2-N,3-O-bis[(3R)-3-hydroxyacyl]-alpha-D-glucosamine + holo-[ACP] + H(+)</text>
        <dbReference type="Rhea" id="RHEA:53836"/>
        <dbReference type="Rhea" id="RHEA-COMP:9685"/>
        <dbReference type="Rhea" id="RHEA-COMP:9945"/>
        <dbReference type="ChEBI" id="CHEBI:15378"/>
        <dbReference type="ChEBI" id="CHEBI:64479"/>
        <dbReference type="ChEBI" id="CHEBI:78827"/>
        <dbReference type="ChEBI" id="CHEBI:137740"/>
        <dbReference type="ChEBI" id="CHEBI:137748"/>
        <dbReference type="EC" id="2.3.1.191"/>
    </reaction>
</comment>
<comment type="pathway">
    <text evidence="1">Bacterial outer membrane biogenesis; LPS lipid A biosynthesis.</text>
</comment>
<comment type="subunit">
    <text evidence="1">Homotrimer.</text>
</comment>
<comment type="similarity">
    <text evidence="1">Belongs to the transferase hexapeptide repeat family. LpxD subfamily.</text>
</comment>
<dbReference type="EC" id="2.3.1.191" evidence="1"/>
<dbReference type="EMBL" id="CP000381">
    <property type="protein sequence ID" value="ABX74096.1"/>
    <property type="molecule type" value="Genomic_DNA"/>
</dbReference>
<dbReference type="RefSeq" id="WP_012222123.1">
    <property type="nucleotide sequence ID" value="NC_010120.1"/>
</dbReference>
<dbReference type="SMR" id="A9M3S8"/>
<dbReference type="KEGG" id="nmn:NMCC_1972"/>
<dbReference type="HOGENOM" id="CLU_049865_0_1_4"/>
<dbReference type="UniPathway" id="UPA00973"/>
<dbReference type="Proteomes" id="UP000001177">
    <property type="component" value="Chromosome"/>
</dbReference>
<dbReference type="GO" id="GO:0016020">
    <property type="term" value="C:membrane"/>
    <property type="evidence" value="ECO:0007669"/>
    <property type="project" value="GOC"/>
</dbReference>
<dbReference type="GO" id="GO:0016410">
    <property type="term" value="F:N-acyltransferase activity"/>
    <property type="evidence" value="ECO:0007669"/>
    <property type="project" value="InterPro"/>
</dbReference>
<dbReference type="GO" id="GO:0009245">
    <property type="term" value="P:lipid A biosynthetic process"/>
    <property type="evidence" value="ECO:0007669"/>
    <property type="project" value="UniProtKB-UniRule"/>
</dbReference>
<dbReference type="CDD" id="cd03352">
    <property type="entry name" value="LbH_LpxD"/>
    <property type="match status" value="1"/>
</dbReference>
<dbReference type="Gene3D" id="1.20.5.170">
    <property type="match status" value="1"/>
</dbReference>
<dbReference type="Gene3D" id="2.160.10.10">
    <property type="entry name" value="Hexapeptide repeat proteins"/>
    <property type="match status" value="1"/>
</dbReference>
<dbReference type="Gene3D" id="3.40.1390.10">
    <property type="entry name" value="MurE/MurF, N-terminal domain"/>
    <property type="match status" value="1"/>
</dbReference>
<dbReference type="HAMAP" id="MF_00523">
    <property type="entry name" value="LpxD"/>
    <property type="match status" value="1"/>
</dbReference>
<dbReference type="InterPro" id="IPR001451">
    <property type="entry name" value="Hexapep"/>
</dbReference>
<dbReference type="InterPro" id="IPR018357">
    <property type="entry name" value="Hexapep_transf_CS"/>
</dbReference>
<dbReference type="InterPro" id="IPR007691">
    <property type="entry name" value="LpxD"/>
</dbReference>
<dbReference type="InterPro" id="IPR011004">
    <property type="entry name" value="Trimer_LpxA-like_sf"/>
</dbReference>
<dbReference type="InterPro" id="IPR020573">
    <property type="entry name" value="UDP_GlcNAc_AcTrfase_non-rep"/>
</dbReference>
<dbReference type="NCBIfam" id="TIGR01853">
    <property type="entry name" value="lipid_A_lpxD"/>
    <property type="match status" value="1"/>
</dbReference>
<dbReference type="NCBIfam" id="NF002060">
    <property type="entry name" value="PRK00892.1"/>
    <property type="match status" value="1"/>
</dbReference>
<dbReference type="PANTHER" id="PTHR43378">
    <property type="entry name" value="UDP-3-O-ACYLGLUCOSAMINE N-ACYLTRANSFERASE"/>
    <property type="match status" value="1"/>
</dbReference>
<dbReference type="PANTHER" id="PTHR43378:SF2">
    <property type="entry name" value="UDP-3-O-ACYLGLUCOSAMINE N-ACYLTRANSFERASE 1, MITOCHONDRIAL-RELATED"/>
    <property type="match status" value="1"/>
</dbReference>
<dbReference type="Pfam" id="PF00132">
    <property type="entry name" value="Hexapep"/>
    <property type="match status" value="2"/>
</dbReference>
<dbReference type="Pfam" id="PF04613">
    <property type="entry name" value="LpxD"/>
    <property type="match status" value="1"/>
</dbReference>
<dbReference type="SUPFAM" id="SSF51161">
    <property type="entry name" value="Trimeric LpxA-like enzymes"/>
    <property type="match status" value="1"/>
</dbReference>
<dbReference type="PROSITE" id="PS00101">
    <property type="entry name" value="HEXAPEP_TRANSFERASES"/>
    <property type="match status" value="1"/>
</dbReference>
<feature type="chain" id="PRO_1000081690" description="UDP-3-O-acylglucosamine N-acyltransferase">
    <location>
        <begin position="1"/>
        <end position="348"/>
    </location>
</feature>
<feature type="active site" description="Proton acceptor" evidence="1">
    <location>
        <position position="241"/>
    </location>
</feature>
<organism>
    <name type="scientific">Neisseria meningitidis serogroup C (strain 053442)</name>
    <dbReference type="NCBI Taxonomy" id="374833"/>
    <lineage>
        <taxon>Bacteria</taxon>
        <taxon>Pseudomonadati</taxon>
        <taxon>Pseudomonadota</taxon>
        <taxon>Betaproteobacteria</taxon>
        <taxon>Neisseriales</taxon>
        <taxon>Neisseriaceae</taxon>
        <taxon>Neisseria</taxon>
    </lineage>
</organism>
<name>LPXD_NEIM0</name>
<keyword id="KW-0012">Acyltransferase</keyword>
<keyword id="KW-0441">Lipid A biosynthesis</keyword>
<keyword id="KW-0444">Lipid biosynthesis</keyword>
<keyword id="KW-0443">Lipid metabolism</keyword>
<keyword id="KW-0677">Repeat</keyword>
<keyword id="KW-0808">Transferase</keyword>